<keyword id="KW-0963">Cytoplasm</keyword>
<keyword id="KW-0240">DNA-directed RNA polymerase</keyword>
<keyword id="KW-0479">Metal-binding</keyword>
<keyword id="KW-0548">Nucleotidyltransferase</keyword>
<keyword id="KW-0804">Transcription</keyword>
<keyword id="KW-0808">Transferase</keyword>
<keyword id="KW-0862">Zinc</keyword>
<comment type="function">
    <text evidence="1">DNA-dependent RNA polymerase (RNAP) catalyzes the transcription of DNA into RNA using the four ribonucleoside triphosphates as substrates.</text>
</comment>
<comment type="catalytic activity">
    <reaction evidence="1">
        <text>RNA(n) + a ribonucleoside 5'-triphosphate = RNA(n+1) + diphosphate</text>
        <dbReference type="Rhea" id="RHEA:21248"/>
        <dbReference type="Rhea" id="RHEA-COMP:14527"/>
        <dbReference type="Rhea" id="RHEA-COMP:17342"/>
        <dbReference type="ChEBI" id="CHEBI:33019"/>
        <dbReference type="ChEBI" id="CHEBI:61557"/>
        <dbReference type="ChEBI" id="CHEBI:140395"/>
        <dbReference type="EC" id="2.7.7.6"/>
    </reaction>
</comment>
<comment type="cofactor">
    <cofactor evidence="1">
        <name>Zn(2+)</name>
        <dbReference type="ChEBI" id="CHEBI:29105"/>
    </cofactor>
    <text evidence="1">Binds 1 zinc ion.</text>
</comment>
<comment type="subunit">
    <text evidence="1">Part of the RNA polymerase complex.</text>
</comment>
<comment type="subcellular location">
    <subcellularLocation>
        <location evidence="1">Cytoplasm</location>
    </subcellularLocation>
</comment>
<comment type="similarity">
    <text evidence="1">Belongs to the archaeal Rpo10/eukaryotic RPB10 RNA polymerase subunit family.</text>
</comment>
<name>RPO10_METBU</name>
<proteinExistence type="inferred from homology"/>
<protein>
    <recommendedName>
        <fullName evidence="1">DNA-directed RNA polymerase subunit Rpo10</fullName>
        <ecNumber evidence="1">2.7.7.6</ecNumber>
    </recommendedName>
    <alternativeName>
        <fullName evidence="1">DNA-directed RNA polymerase subunit N</fullName>
    </alternativeName>
</protein>
<reference key="1">
    <citation type="journal article" date="2009" name="ISME J.">
        <title>The genome sequence of the psychrophilic archaeon, Methanococcoides burtonii: the role of genome evolution in cold adaptation.</title>
        <authorList>
            <person name="Allen M.A."/>
            <person name="Lauro F.M."/>
            <person name="Williams T.J."/>
            <person name="Burg D."/>
            <person name="Siddiqui K.S."/>
            <person name="De Francisci D."/>
            <person name="Chong K.W."/>
            <person name="Pilak O."/>
            <person name="Chew H.H."/>
            <person name="De Maere M.Z."/>
            <person name="Ting L."/>
            <person name="Katrib M."/>
            <person name="Ng C."/>
            <person name="Sowers K.R."/>
            <person name="Galperin M.Y."/>
            <person name="Anderson I.J."/>
            <person name="Ivanova N."/>
            <person name="Dalin E."/>
            <person name="Martinez M."/>
            <person name="Lapidus A."/>
            <person name="Hauser L."/>
            <person name="Land M."/>
            <person name="Thomas T."/>
            <person name="Cavicchioli R."/>
        </authorList>
    </citation>
    <scope>NUCLEOTIDE SEQUENCE [LARGE SCALE GENOMIC DNA]</scope>
    <source>
        <strain>DSM 6242 / NBRC 107633 / OCM 468 / ACE-M</strain>
    </source>
</reference>
<feature type="chain" id="PRO_0000304191" description="DNA-directed RNA polymerase subunit Rpo10">
    <location>
        <begin position="1"/>
        <end position="62"/>
    </location>
</feature>
<feature type="binding site" evidence="1">
    <location>
        <position position="6"/>
    </location>
    <ligand>
        <name>Zn(2+)</name>
        <dbReference type="ChEBI" id="CHEBI:29105"/>
    </ligand>
</feature>
<feature type="binding site" evidence="1">
    <location>
        <position position="9"/>
    </location>
    <ligand>
        <name>Zn(2+)</name>
        <dbReference type="ChEBI" id="CHEBI:29105"/>
    </ligand>
</feature>
<feature type="binding site" evidence="1">
    <location>
        <position position="43"/>
    </location>
    <ligand>
        <name>Zn(2+)</name>
        <dbReference type="ChEBI" id="CHEBI:29105"/>
    </ligand>
</feature>
<feature type="binding site" evidence="1">
    <location>
        <position position="44"/>
    </location>
    <ligand>
        <name>Zn(2+)</name>
        <dbReference type="ChEBI" id="CHEBI:29105"/>
    </ligand>
</feature>
<evidence type="ECO:0000255" key="1">
    <source>
        <dbReference type="HAMAP-Rule" id="MF_00250"/>
    </source>
</evidence>
<sequence length="62" mass="7203">MIPVRCFTCGKVIAGSWEEYKRRTGEGEDPATVLDDLKFVRYCCRRMFLAHVELVDTMAPYQ</sequence>
<gene>
    <name evidence="1" type="primary">rpo10</name>
    <name evidence="1" type="synonym">rpoN</name>
    <name type="ordered locus">Mbur_2391</name>
</gene>
<dbReference type="EC" id="2.7.7.6" evidence="1"/>
<dbReference type="EMBL" id="CP000300">
    <property type="protein sequence ID" value="ABE53242.1"/>
    <property type="molecule type" value="Genomic_DNA"/>
</dbReference>
<dbReference type="RefSeq" id="WP_011500377.1">
    <property type="nucleotide sequence ID" value="NC_007955.1"/>
</dbReference>
<dbReference type="SMR" id="Q12TI4"/>
<dbReference type="STRING" id="259564.Mbur_2391"/>
<dbReference type="GeneID" id="3998978"/>
<dbReference type="KEGG" id="mbu:Mbur_2391"/>
<dbReference type="HOGENOM" id="CLU_143122_1_1_2"/>
<dbReference type="OrthoDB" id="371754at2157"/>
<dbReference type="Proteomes" id="UP000001979">
    <property type="component" value="Chromosome"/>
</dbReference>
<dbReference type="GO" id="GO:0005737">
    <property type="term" value="C:cytoplasm"/>
    <property type="evidence" value="ECO:0007669"/>
    <property type="project" value="UniProtKB-SubCell"/>
</dbReference>
<dbReference type="GO" id="GO:0000428">
    <property type="term" value="C:DNA-directed RNA polymerase complex"/>
    <property type="evidence" value="ECO:0007669"/>
    <property type="project" value="UniProtKB-KW"/>
</dbReference>
<dbReference type="GO" id="GO:0003677">
    <property type="term" value="F:DNA binding"/>
    <property type="evidence" value="ECO:0007669"/>
    <property type="project" value="InterPro"/>
</dbReference>
<dbReference type="GO" id="GO:0003899">
    <property type="term" value="F:DNA-directed RNA polymerase activity"/>
    <property type="evidence" value="ECO:0007669"/>
    <property type="project" value="UniProtKB-UniRule"/>
</dbReference>
<dbReference type="GO" id="GO:0008270">
    <property type="term" value="F:zinc ion binding"/>
    <property type="evidence" value="ECO:0007669"/>
    <property type="project" value="UniProtKB-UniRule"/>
</dbReference>
<dbReference type="GO" id="GO:0006351">
    <property type="term" value="P:DNA-templated transcription"/>
    <property type="evidence" value="ECO:0007669"/>
    <property type="project" value="UniProtKB-UniRule"/>
</dbReference>
<dbReference type="FunFam" id="1.10.10.60:FF:000335">
    <property type="entry name" value="DNA-directed RNA polymerase subunit N, putative"/>
    <property type="match status" value="1"/>
</dbReference>
<dbReference type="Gene3D" id="1.10.10.60">
    <property type="entry name" value="Homeodomain-like"/>
    <property type="match status" value="1"/>
</dbReference>
<dbReference type="HAMAP" id="MF_00250">
    <property type="entry name" value="RNApol_arch_Rpo10"/>
    <property type="match status" value="1"/>
</dbReference>
<dbReference type="InterPro" id="IPR023580">
    <property type="entry name" value="RNA_pol_su_RPB10"/>
</dbReference>
<dbReference type="InterPro" id="IPR020789">
    <property type="entry name" value="RNA_pol_suN_Zn-BS"/>
</dbReference>
<dbReference type="InterPro" id="IPR000268">
    <property type="entry name" value="RPABC5/Rpb10"/>
</dbReference>
<dbReference type="NCBIfam" id="NF003089">
    <property type="entry name" value="PRK04016.1"/>
    <property type="match status" value="1"/>
</dbReference>
<dbReference type="PANTHER" id="PTHR23431:SF3">
    <property type="entry name" value="DNA-DIRECTED RNA POLYMERASES I, II, AND III SUBUNIT RPABC5"/>
    <property type="match status" value="1"/>
</dbReference>
<dbReference type="PANTHER" id="PTHR23431">
    <property type="entry name" value="DNA-DIRECTED RNA POLYMERASES I, II, AND III SUBUNIT RPABC5 FAMILY MEMBER"/>
    <property type="match status" value="1"/>
</dbReference>
<dbReference type="Pfam" id="PF01194">
    <property type="entry name" value="RNA_pol_N"/>
    <property type="match status" value="1"/>
</dbReference>
<dbReference type="PIRSF" id="PIRSF005653">
    <property type="entry name" value="RNA_pol_N/8_sub"/>
    <property type="match status" value="1"/>
</dbReference>
<dbReference type="SUPFAM" id="SSF46924">
    <property type="entry name" value="RNA polymerase subunit RPB10"/>
    <property type="match status" value="1"/>
</dbReference>
<dbReference type="PROSITE" id="PS01112">
    <property type="entry name" value="RNA_POL_N_8KD"/>
    <property type="match status" value="1"/>
</dbReference>
<organism>
    <name type="scientific">Methanococcoides burtonii (strain DSM 6242 / NBRC 107633 / OCM 468 / ACE-M)</name>
    <dbReference type="NCBI Taxonomy" id="259564"/>
    <lineage>
        <taxon>Archaea</taxon>
        <taxon>Methanobacteriati</taxon>
        <taxon>Methanobacteriota</taxon>
        <taxon>Stenosarchaea group</taxon>
        <taxon>Methanomicrobia</taxon>
        <taxon>Methanosarcinales</taxon>
        <taxon>Methanosarcinaceae</taxon>
        <taxon>Methanococcoides</taxon>
    </lineage>
</organism>
<accession>Q12TI4</accession>